<keyword id="KW-0028">Amino-acid biosynthesis</keyword>
<keyword id="KW-0057">Aromatic amino acid biosynthesis</keyword>
<keyword id="KW-0328">Glycosyltransferase</keyword>
<keyword id="KW-0460">Magnesium</keyword>
<keyword id="KW-0479">Metal-binding</keyword>
<keyword id="KW-1185">Reference proteome</keyword>
<keyword id="KW-0808">Transferase</keyword>
<keyword id="KW-0822">Tryptophan biosynthesis</keyword>
<proteinExistence type="inferred from homology"/>
<protein>
    <recommendedName>
        <fullName evidence="1">Anthranilate phosphoribosyltransferase</fullName>
        <ecNumber evidence="1">2.4.2.18</ecNumber>
    </recommendedName>
</protein>
<reference key="1">
    <citation type="submission" date="2006-12" db="EMBL/GenBank/DDBJ databases">
        <title>Complete sequence of Halorhodospira halophila SL1.</title>
        <authorList>
            <consortium name="US DOE Joint Genome Institute"/>
            <person name="Copeland A."/>
            <person name="Lucas S."/>
            <person name="Lapidus A."/>
            <person name="Barry K."/>
            <person name="Detter J.C."/>
            <person name="Glavina del Rio T."/>
            <person name="Hammon N."/>
            <person name="Israni S."/>
            <person name="Dalin E."/>
            <person name="Tice H."/>
            <person name="Pitluck S."/>
            <person name="Saunders E."/>
            <person name="Brettin T."/>
            <person name="Bruce D."/>
            <person name="Han C."/>
            <person name="Tapia R."/>
            <person name="Schmutz J."/>
            <person name="Larimer F."/>
            <person name="Land M."/>
            <person name="Hauser L."/>
            <person name="Kyrpides N."/>
            <person name="Mikhailova N."/>
            <person name="Hoff W."/>
            <person name="Richardson P."/>
        </authorList>
    </citation>
    <scope>NUCLEOTIDE SEQUENCE [LARGE SCALE GENOMIC DNA]</scope>
    <source>
        <strain>DSM 244 / SL1</strain>
    </source>
</reference>
<organism>
    <name type="scientific">Halorhodospira halophila (strain DSM 244 / SL1)</name>
    <name type="common">Ectothiorhodospira halophila (strain DSM 244 / SL1)</name>
    <dbReference type="NCBI Taxonomy" id="349124"/>
    <lineage>
        <taxon>Bacteria</taxon>
        <taxon>Pseudomonadati</taxon>
        <taxon>Pseudomonadota</taxon>
        <taxon>Gammaproteobacteria</taxon>
        <taxon>Chromatiales</taxon>
        <taxon>Ectothiorhodospiraceae</taxon>
        <taxon>Halorhodospira</taxon>
    </lineage>
</organism>
<sequence>MDLTAALRRITENQDLSPDEMTAVFRTIMTGGATPAQIGGFLIGMRLKGETVQEMAAAASVMRELAERVDVGDDFHRLVDTCGTGGDARGTLNVSTAAAFVTAAGGIPVAKHGNRSVSGRSGSADLLEACGATLELSSEAVAECIRRVNVGFLFAPLHHSAMKHAVGPRKELGVRTLFNLVGPLSNPAGARRQLLGVFGQEWVRPVAEVLQALGSDHVLVVHAEDGLDEISIAAPTRIAELRNGQIEEYTVTPEDLGLRSAPLNEVTISGTKDSLAMIRAAFSGERIAAMELIAANAGAALYVGGEAPDLRRGVERARELMTSGAAAQTLERFVATTKELAQ</sequence>
<comment type="function">
    <text evidence="1">Catalyzes the transfer of the phosphoribosyl group of 5-phosphorylribose-1-pyrophosphate (PRPP) to anthranilate to yield N-(5'-phosphoribosyl)-anthranilate (PRA).</text>
</comment>
<comment type="catalytic activity">
    <reaction evidence="1">
        <text>N-(5-phospho-beta-D-ribosyl)anthranilate + diphosphate = 5-phospho-alpha-D-ribose 1-diphosphate + anthranilate</text>
        <dbReference type="Rhea" id="RHEA:11768"/>
        <dbReference type="ChEBI" id="CHEBI:16567"/>
        <dbReference type="ChEBI" id="CHEBI:18277"/>
        <dbReference type="ChEBI" id="CHEBI:33019"/>
        <dbReference type="ChEBI" id="CHEBI:58017"/>
        <dbReference type="EC" id="2.4.2.18"/>
    </reaction>
</comment>
<comment type="cofactor">
    <cofactor evidence="1">
        <name>Mg(2+)</name>
        <dbReference type="ChEBI" id="CHEBI:18420"/>
    </cofactor>
    <text evidence="1">Binds 2 magnesium ions per monomer.</text>
</comment>
<comment type="pathway">
    <text evidence="1">Amino-acid biosynthesis; L-tryptophan biosynthesis; L-tryptophan from chorismate: step 2/5.</text>
</comment>
<comment type="subunit">
    <text evidence="1">Homodimer.</text>
</comment>
<comment type="similarity">
    <text evidence="1">Belongs to the anthranilate phosphoribosyltransferase family.</text>
</comment>
<accession>A1WYT2</accession>
<dbReference type="EC" id="2.4.2.18" evidence="1"/>
<dbReference type="EMBL" id="CP000544">
    <property type="protein sequence ID" value="ABM62844.1"/>
    <property type="molecule type" value="Genomic_DNA"/>
</dbReference>
<dbReference type="RefSeq" id="WP_011814866.1">
    <property type="nucleotide sequence ID" value="NC_008789.1"/>
</dbReference>
<dbReference type="SMR" id="A1WYT2"/>
<dbReference type="STRING" id="349124.Hhal_2080"/>
<dbReference type="KEGG" id="hha:Hhal_2080"/>
<dbReference type="eggNOG" id="COG0547">
    <property type="taxonomic scope" value="Bacteria"/>
</dbReference>
<dbReference type="HOGENOM" id="CLU_034315_2_1_6"/>
<dbReference type="OrthoDB" id="9806430at2"/>
<dbReference type="UniPathway" id="UPA00035">
    <property type="reaction ID" value="UER00041"/>
</dbReference>
<dbReference type="Proteomes" id="UP000000647">
    <property type="component" value="Chromosome"/>
</dbReference>
<dbReference type="GO" id="GO:0005829">
    <property type="term" value="C:cytosol"/>
    <property type="evidence" value="ECO:0007669"/>
    <property type="project" value="TreeGrafter"/>
</dbReference>
<dbReference type="GO" id="GO:0004048">
    <property type="term" value="F:anthranilate phosphoribosyltransferase activity"/>
    <property type="evidence" value="ECO:0007669"/>
    <property type="project" value="UniProtKB-UniRule"/>
</dbReference>
<dbReference type="GO" id="GO:0000287">
    <property type="term" value="F:magnesium ion binding"/>
    <property type="evidence" value="ECO:0007669"/>
    <property type="project" value="UniProtKB-UniRule"/>
</dbReference>
<dbReference type="GO" id="GO:0000162">
    <property type="term" value="P:L-tryptophan biosynthetic process"/>
    <property type="evidence" value="ECO:0007669"/>
    <property type="project" value="UniProtKB-UniRule"/>
</dbReference>
<dbReference type="FunFam" id="1.20.970.10:FF:000006">
    <property type="entry name" value="Anthranilate phosphoribosyltransferase"/>
    <property type="match status" value="1"/>
</dbReference>
<dbReference type="FunFam" id="3.40.1030.10:FF:000002">
    <property type="entry name" value="Anthranilate phosphoribosyltransferase"/>
    <property type="match status" value="1"/>
</dbReference>
<dbReference type="Gene3D" id="3.40.1030.10">
    <property type="entry name" value="Nucleoside phosphorylase/phosphoribosyltransferase catalytic domain"/>
    <property type="match status" value="1"/>
</dbReference>
<dbReference type="Gene3D" id="1.20.970.10">
    <property type="entry name" value="Transferase, Pyrimidine Nucleoside Phosphorylase, Chain C"/>
    <property type="match status" value="1"/>
</dbReference>
<dbReference type="HAMAP" id="MF_00211">
    <property type="entry name" value="TrpD"/>
    <property type="match status" value="1"/>
</dbReference>
<dbReference type="InterPro" id="IPR005940">
    <property type="entry name" value="Anthranilate_Pribosyl_Tfrase"/>
</dbReference>
<dbReference type="InterPro" id="IPR000312">
    <property type="entry name" value="Glycosyl_Trfase_fam3"/>
</dbReference>
<dbReference type="InterPro" id="IPR017459">
    <property type="entry name" value="Glycosyl_Trfase_fam3_N_dom"/>
</dbReference>
<dbReference type="InterPro" id="IPR036320">
    <property type="entry name" value="Glycosyl_Trfase_fam3_N_dom_sf"/>
</dbReference>
<dbReference type="InterPro" id="IPR035902">
    <property type="entry name" value="Nuc_phospho_transferase"/>
</dbReference>
<dbReference type="NCBIfam" id="TIGR01245">
    <property type="entry name" value="trpD"/>
    <property type="match status" value="1"/>
</dbReference>
<dbReference type="PANTHER" id="PTHR43285">
    <property type="entry name" value="ANTHRANILATE PHOSPHORIBOSYLTRANSFERASE"/>
    <property type="match status" value="1"/>
</dbReference>
<dbReference type="PANTHER" id="PTHR43285:SF2">
    <property type="entry name" value="ANTHRANILATE PHOSPHORIBOSYLTRANSFERASE"/>
    <property type="match status" value="1"/>
</dbReference>
<dbReference type="Pfam" id="PF02885">
    <property type="entry name" value="Glycos_trans_3N"/>
    <property type="match status" value="1"/>
</dbReference>
<dbReference type="Pfam" id="PF00591">
    <property type="entry name" value="Glycos_transf_3"/>
    <property type="match status" value="1"/>
</dbReference>
<dbReference type="SUPFAM" id="SSF52418">
    <property type="entry name" value="Nucleoside phosphorylase/phosphoribosyltransferase catalytic domain"/>
    <property type="match status" value="1"/>
</dbReference>
<dbReference type="SUPFAM" id="SSF47648">
    <property type="entry name" value="Nucleoside phosphorylase/phosphoribosyltransferase N-terminal domain"/>
    <property type="match status" value="1"/>
</dbReference>
<gene>
    <name evidence="1" type="primary">trpD</name>
    <name type="ordered locus">Hhal_2080</name>
</gene>
<evidence type="ECO:0000255" key="1">
    <source>
        <dbReference type="HAMAP-Rule" id="MF_00211"/>
    </source>
</evidence>
<feature type="chain" id="PRO_0000325430" description="Anthranilate phosphoribosyltransferase">
    <location>
        <begin position="1"/>
        <end position="342"/>
    </location>
</feature>
<feature type="binding site" evidence="1">
    <location>
        <position position="83"/>
    </location>
    <ligand>
        <name>5-phospho-alpha-D-ribose 1-diphosphate</name>
        <dbReference type="ChEBI" id="CHEBI:58017"/>
    </ligand>
</feature>
<feature type="binding site" evidence="1">
    <location>
        <position position="83"/>
    </location>
    <ligand>
        <name>anthranilate</name>
        <dbReference type="ChEBI" id="CHEBI:16567"/>
        <label>1</label>
    </ligand>
</feature>
<feature type="binding site" evidence="1">
    <location>
        <begin position="86"/>
        <end position="87"/>
    </location>
    <ligand>
        <name>5-phospho-alpha-D-ribose 1-diphosphate</name>
        <dbReference type="ChEBI" id="CHEBI:58017"/>
    </ligand>
</feature>
<feature type="binding site" evidence="1">
    <location>
        <position position="91"/>
    </location>
    <ligand>
        <name>5-phospho-alpha-D-ribose 1-diphosphate</name>
        <dbReference type="ChEBI" id="CHEBI:58017"/>
    </ligand>
</feature>
<feature type="binding site" evidence="1">
    <location>
        <begin position="93"/>
        <end position="96"/>
    </location>
    <ligand>
        <name>5-phospho-alpha-D-ribose 1-diphosphate</name>
        <dbReference type="ChEBI" id="CHEBI:58017"/>
    </ligand>
</feature>
<feature type="binding site" evidence="1">
    <location>
        <position position="95"/>
    </location>
    <ligand>
        <name>Mg(2+)</name>
        <dbReference type="ChEBI" id="CHEBI:18420"/>
        <label>1</label>
    </ligand>
</feature>
<feature type="binding site" evidence="1">
    <location>
        <begin position="111"/>
        <end position="119"/>
    </location>
    <ligand>
        <name>5-phospho-alpha-D-ribose 1-diphosphate</name>
        <dbReference type="ChEBI" id="CHEBI:58017"/>
    </ligand>
</feature>
<feature type="binding site" evidence="1">
    <location>
        <position position="114"/>
    </location>
    <ligand>
        <name>anthranilate</name>
        <dbReference type="ChEBI" id="CHEBI:16567"/>
        <label>1</label>
    </ligand>
</feature>
<feature type="binding site" evidence="1">
    <location>
        <position position="123"/>
    </location>
    <ligand>
        <name>5-phospho-alpha-D-ribose 1-diphosphate</name>
        <dbReference type="ChEBI" id="CHEBI:58017"/>
    </ligand>
</feature>
<feature type="binding site" evidence="1">
    <location>
        <position position="169"/>
    </location>
    <ligand>
        <name>anthranilate</name>
        <dbReference type="ChEBI" id="CHEBI:16567"/>
        <label>2</label>
    </ligand>
</feature>
<feature type="binding site" evidence="1">
    <location>
        <position position="228"/>
    </location>
    <ligand>
        <name>Mg(2+)</name>
        <dbReference type="ChEBI" id="CHEBI:18420"/>
        <label>2</label>
    </ligand>
</feature>
<feature type="binding site" evidence="1">
    <location>
        <position position="229"/>
    </location>
    <ligand>
        <name>Mg(2+)</name>
        <dbReference type="ChEBI" id="CHEBI:18420"/>
        <label>1</label>
    </ligand>
</feature>
<feature type="binding site" evidence="1">
    <location>
        <position position="229"/>
    </location>
    <ligand>
        <name>Mg(2+)</name>
        <dbReference type="ChEBI" id="CHEBI:18420"/>
        <label>2</label>
    </ligand>
</feature>
<name>TRPD_HALHL</name>